<evidence type="ECO:0000255" key="1">
    <source>
        <dbReference type="HAMAP-Rule" id="MF_00248"/>
    </source>
</evidence>
<accession>A9IH51</accession>
<gene>
    <name evidence="1" type="primary">hslV</name>
    <name type="ordered locus">Bpet4796</name>
</gene>
<organism>
    <name type="scientific">Bordetella petrii (strain ATCC BAA-461 / DSM 12804 / CCUG 43448)</name>
    <dbReference type="NCBI Taxonomy" id="340100"/>
    <lineage>
        <taxon>Bacteria</taxon>
        <taxon>Pseudomonadati</taxon>
        <taxon>Pseudomonadota</taxon>
        <taxon>Betaproteobacteria</taxon>
        <taxon>Burkholderiales</taxon>
        <taxon>Alcaligenaceae</taxon>
        <taxon>Bordetella</taxon>
    </lineage>
</organism>
<sequence>MEQFHATTIVCVRRGNKVALGGDGQVTLGNIVIKGTARKIRRLYHDKILAGFAGATADAFTLQERFEAKLEKHQGHLMRAAVELTRDWRTDRVLRRLEAMLIVADAEHTLVLTGNGDVLEPEHGLAAIGSGGAYAQSAALALLRNTELSPQDIVKQSLEIAGDICIYTNQNHVIETLGE</sequence>
<proteinExistence type="inferred from homology"/>
<protein>
    <recommendedName>
        <fullName evidence="1">ATP-dependent protease subunit HslV</fullName>
        <ecNumber evidence="1">3.4.25.2</ecNumber>
    </recommendedName>
</protein>
<keyword id="KW-0021">Allosteric enzyme</keyword>
<keyword id="KW-0963">Cytoplasm</keyword>
<keyword id="KW-0378">Hydrolase</keyword>
<keyword id="KW-0479">Metal-binding</keyword>
<keyword id="KW-0645">Protease</keyword>
<keyword id="KW-0915">Sodium</keyword>
<keyword id="KW-0346">Stress response</keyword>
<keyword id="KW-0888">Threonine protease</keyword>
<name>HSLV_BORPD</name>
<feature type="chain" id="PRO_1000100873" description="ATP-dependent protease subunit HslV">
    <location>
        <begin position="1"/>
        <end position="179"/>
    </location>
</feature>
<feature type="active site" evidence="1">
    <location>
        <position position="7"/>
    </location>
</feature>
<feature type="binding site" evidence="1">
    <location>
        <position position="162"/>
    </location>
    <ligand>
        <name>Na(+)</name>
        <dbReference type="ChEBI" id="CHEBI:29101"/>
    </ligand>
</feature>
<feature type="binding site" evidence="1">
    <location>
        <position position="165"/>
    </location>
    <ligand>
        <name>Na(+)</name>
        <dbReference type="ChEBI" id="CHEBI:29101"/>
    </ligand>
</feature>
<feature type="binding site" evidence="1">
    <location>
        <position position="168"/>
    </location>
    <ligand>
        <name>Na(+)</name>
        <dbReference type="ChEBI" id="CHEBI:29101"/>
    </ligand>
</feature>
<dbReference type="EC" id="3.4.25.2" evidence="1"/>
<dbReference type="EMBL" id="AM902716">
    <property type="protein sequence ID" value="CAP45148.1"/>
    <property type="molecule type" value="Genomic_DNA"/>
</dbReference>
<dbReference type="SMR" id="A9IH51"/>
<dbReference type="STRING" id="94624.Bpet4796"/>
<dbReference type="MEROPS" id="T01.006"/>
<dbReference type="KEGG" id="bpt:Bpet4796"/>
<dbReference type="eggNOG" id="COG5405">
    <property type="taxonomic scope" value="Bacteria"/>
</dbReference>
<dbReference type="Proteomes" id="UP000001225">
    <property type="component" value="Chromosome"/>
</dbReference>
<dbReference type="GO" id="GO:0009376">
    <property type="term" value="C:HslUV protease complex"/>
    <property type="evidence" value="ECO:0007669"/>
    <property type="project" value="UniProtKB-UniRule"/>
</dbReference>
<dbReference type="GO" id="GO:0005839">
    <property type="term" value="C:proteasome core complex"/>
    <property type="evidence" value="ECO:0007669"/>
    <property type="project" value="InterPro"/>
</dbReference>
<dbReference type="GO" id="GO:0046872">
    <property type="term" value="F:metal ion binding"/>
    <property type="evidence" value="ECO:0007669"/>
    <property type="project" value="UniProtKB-KW"/>
</dbReference>
<dbReference type="GO" id="GO:0004298">
    <property type="term" value="F:threonine-type endopeptidase activity"/>
    <property type="evidence" value="ECO:0007669"/>
    <property type="project" value="UniProtKB-KW"/>
</dbReference>
<dbReference type="GO" id="GO:0051603">
    <property type="term" value="P:proteolysis involved in protein catabolic process"/>
    <property type="evidence" value="ECO:0007669"/>
    <property type="project" value="InterPro"/>
</dbReference>
<dbReference type="CDD" id="cd01913">
    <property type="entry name" value="protease_HslV"/>
    <property type="match status" value="1"/>
</dbReference>
<dbReference type="FunFam" id="3.60.20.10:FF:000002">
    <property type="entry name" value="ATP-dependent protease subunit HslV"/>
    <property type="match status" value="1"/>
</dbReference>
<dbReference type="Gene3D" id="3.60.20.10">
    <property type="entry name" value="Glutamine Phosphoribosylpyrophosphate, subunit 1, domain 1"/>
    <property type="match status" value="1"/>
</dbReference>
<dbReference type="HAMAP" id="MF_00248">
    <property type="entry name" value="HslV"/>
    <property type="match status" value="1"/>
</dbReference>
<dbReference type="InterPro" id="IPR022281">
    <property type="entry name" value="ATP-dep_Prtase_HsIV_su"/>
</dbReference>
<dbReference type="InterPro" id="IPR029055">
    <property type="entry name" value="Ntn_hydrolases_N"/>
</dbReference>
<dbReference type="InterPro" id="IPR001353">
    <property type="entry name" value="Proteasome_sua/b"/>
</dbReference>
<dbReference type="InterPro" id="IPR023333">
    <property type="entry name" value="Proteasome_suB-type"/>
</dbReference>
<dbReference type="NCBIfam" id="TIGR03692">
    <property type="entry name" value="ATP_dep_HslV"/>
    <property type="match status" value="1"/>
</dbReference>
<dbReference type="NCBIfam" id="NF003964">
    <property type="entry name" value="PRK05456.1"/>
    <property type="match status" value="1"/>
</dbReference>
<dbReference type="PANTHER" id="PTHR32194:SF0">
    <property type="entry name" value="ATP-DEPENDENT PROTEASE SUBUNIT HSLV"/>
    <property type="match status" value="1"/>
</dbReference>
<dbReference type="PANTHER" id="PTHR32194">
    <property type="entry name" value="METALLOPROTEASE TLDD"/>
    <property type="match status" value="1"/>
</dbReference>
<dbReference type="Pfam" id="PF00227">
    <property type="entry name" value="Proteasome"/>
    <property type="match status" value="1"/>
</dbReference>
<dbReference type="PIRSF" id="PIRSF039093">
    <property type="entry name" value="HslV"/>
    <property type="match status" value="1"/>
</dbReference>
<dbReference type="SUPFAM" id="SSF56235">
    <property type="entry name" value="N-terminal nucleophile aminohydrolases (Ntn hydrolases)"/>
    <property type="match status" value="1"/>
</dbReference>
<dbReference type="PROSITE" id="PS51476">
    <property type="entry name" value="PROTEASOME_BETA_2"/>
    <property type="match status" value="1"/>
</dbReference>
<reference key="1">
    <citation type="journal article" date="2008" name="BMC Genomics">
        <title>The missing link: Bordetella petrii is endowed with both the metabolic versatility of environmental bacteria and virulence traits of pathogenic Bordetellae.</title>
        <authorList>
            <person name="Gross R."/>
            <person name="Guzman C.A."/>
            <person name="Sebaihia M."/>
            <person name="Martin dos Santos V.A.P."/>
            <person name="Pieper D.H."/>
            <person name="Koebnik R."/>
            <person name="Lechner M."/>
            <person name="Bartels D."/>
            <person name="Buhrmester J."/>
            <person name="Choudhuri J.V."/>
            <person name="Ebensen T."/>
            <person name="Gaigalat L."/>
            <person name="Herrmann S."/>
            <person name="Khachane A.N."/>
            <person name="Larisch C."/>
            <person name="Link S."/>
            <person name="Linke B."/>
            <person name="Meyer F."/>
            <person name="Mormann S."/>
            <person name="Nakunst D."/>
            <person name="Rueckert C."/>
            <person name="Schneiker-Bekel S."/>
            <person name="Schulze K."/>
            <person name="Voerholter F.-J."/>
            <person name="Yevsa T."/>
            <person name="Engle J.T."/>
            <person name="Goldman W.E."/>
            <person name="Puehler A."/>
            <person name="Goebel U.B."/>
            <person name="Goesmann A."/>
            <person name="Bloecker H."/>
            <person name="Kaiser O."/>
            <person name="Martinez-Arias R."/>
        </authorList>
    </citation>
    <scope>NUCLEOTIDE SEQUENCE [LARGE SCALE GENOMIC DNA]</scope>
    <source>
        <strain>ATCC BAA-461 / DSM 12804 / CCUG 43448</strain>
    </source>
</reference>
<comment type="function">
    <text evidence="1">Protease subunit of a proteasome-like degradation complex believed to be a general protein degrading machinery.</text>
</comment>
<comment type="catalytic activity">
    <reaction evidence="1">
        <text>ATP-dependent cleavage of peptide bonds with broad specificity.</text>
        <dbReference type="EC" id="3.4.25.2"/>
    </reaction>
</comment>
<comment type="activity regulation">
    <text evidence="1">Allosterically activated by HslU binding.</text>
</comment>
<comment type="subunit">
    <text evidence="1">A double ring-shaped homohexamer of HslV is capped on each side by a ring-shaped HslU homohexamer. The assembly of the HslU/HslV complex is dependent on binding of ATP.</text>
</comment>
<comment type="subcellular location">
    <subcellularLocation>
        <location evidence="1">Cytoplasm</location>
    </subcellularLocation>
</comment>
<comment type="similarity">
    <text evidence="1">Belongs to the peptidase T1B family. HslV subfamily.</text>
</comment>